<protein>
    <recommendedName>
        <fullName evidence="1">Ribonuclease P protein component</fullName>
        <shortName evidence="1">RNase P protein</shortName>
        <shortName evidence="1">RNaseP protein</shortName>
        <ecNumber evidence="1">3.1.26.5</ecNumber>
    </recommendedName>
    <alternativeName>
        <fullName evidence="1">Protein C5</fullName>
    </alternativeName>
</protein>
<gene>
    <name evidence="1" type="primary">rnpA</name>
    <name type="ordered locus">EcSMS35_4071</name>
</gene>
<proteinExistence type="inferred from homology"/>
<evidence type="ECO:0000255" key="1">
    <source>
        <dbReference type="HAMAP-Rule" id="MF_00227"/>
    </source>
</evidence>
<accession>B1LL31</accession>
<reference key="1">
    <citation type="journal article" date="2008" name="J. Bacteriol.">
        <title>Insights into the environmental resistance gene pool from the genome sequence of the multidrug-resistant environmental isolate Escherichia coli SMS-3-5.</title>
        <authorList>
            <person name="Fricke W.F."/>
            <person name="Wright M.S."/>
            <person name="Lindell A.H."/>
            <person name="Harkins D.M."/>
            <person name="Baker-Austin C."/>
            <person name="Ravel J."/>
            <person name="Stepanauskas R."/>
        </authorList>
    </citation>
    <scope>NUCLEOTIDE SEQUENCE [LARGE SCALE GENOMIC DNA]</scope>
    <source>
        <strain>SMS-3-5 / SECEC</strain>
    </source>
</reference>
<name>RNPA_ECOSM</name>
<dbReference type="EC" id="3.1.26.5" evidence="1"/>
<dbReference type="EMBL" id="CP000970">
    <property type="protein sequence ID" value="ACB15751.1"/>
    <property type="molecule type" value="Genomic_DNA"/>
</dbReference>
<dbReference type="RefSeq" id="WP_000239730.1">
    <property type="nucleotide sequence ID" value="NC_010498.1"/>
</dbReference>
<dbReference type="SMR" id="B1LL31"/>
<dbReference type="GeneID" id="93778446"/>
<dbReference type="KEGG" id="ecm:EcSMS35_4071"/>
<dbReference type="HOGENOM" id="CLU_117179_11_0_6"/>
<dbReference type="Proteomes" id="UP000007011">
    <property type="component" value="Chromosome"/>
</dbReference>
<dbReference type="GO" id="GO:0030677">
    <property type="term" value="C:ribonuclease P complex"/>
    <property type="evidence" value="ECO:0007669"/>
    <property type="project" value="TreeGrafter"/>
</dbReference>
<dbReference type="GO" id="GO:0042781">
    <property type="term" value="F:3'-tRNA processing endoribonuclease activity"/>
    <property type="evidence" value="ECO:0007669"/>
    <property type="project" value="TreeGrafter"/>
</dbReference>
<dbReference type="GO" id="GO:0004526">
    <property type="term" value="F:ribonuclease P activity"/>
    <property type="evidence" value="ECO:0007669"/>
    <property type="project" value="UniProtKB-UniRule"/>
</dbReference>
<dbReference type="GO" id="GO:0000049">
    <property type="term" value="F:tRNA binding"/>
    <property type="evidence" value="ECO:0007669"/>
    <property type="project" value="UniProtKB-UniRule"/>
</dbReference>
<dbReference type="GO" id="GO:0001682">
    <property type="term" value="P:tRNA 5'-leader removal"/>
    <property type="evidence" value="ECO:0007669"/>
    <property type="project" value="UniProtKB-UniRule"/>
</dbReference>
<dbReference type="FunFam" id="3.30.230.10:FF:000016">
    <property type="entry name" value="Ribonuclease P protein component"/>
    <property type="match status" value="1"/>
</dbReference>
<dbReference type="Gene3D" id="3.30.230.10">
    <property type="match status" value="1"/>
</dbReference>
<dbReference type="HAMAP" id="MF_00227">
    <property type="entry name" value="RNase_P"/>
    <property type="match status" value="1"/>
</dbReference>
<dbReference type="InterPro" id="IPR020568">
    <property type="entry name" value="Ribosomal_Su5_D2-typ_SF"/>
</dbReference>
<dbReference type="InterPro" id="IPR014721">
    <property type="entry name" value="Ribsml_uS5_D2-typ_fold_subgr"/>
</dbReference>
<dbReference type="InterPro" id="IPR000100">
    <property type="entry name" value="RNase_P"/>
</dbReference>
<dbReference type="InterPro" id="IPR020539">
    <property type="entry name" value="RNase_P_CS"/>
</dbReference>
<dbReference type="NCBIfam" id="TIGR00188">
    <property type="entry name" value="rnpA"/>
    <property type="match status" value="1"/>
</dbReference>
<dbReference type="PANTHER" id="PTHR33992">
    <property type="entry name" value="RIBONUCLEASE P PROTEIN COMPONENT"/>
    <property type="match status" value="1"/>
</dbReference>
<dbReference type="PANTHER" id="PTHR33992:SF1">
    <property type="entry name" value="RIBONUCLEASE P PROTEIN COMPONENT"/>
    <property type="match status" value="1"/>
</dbReference>
<dbReference type="Pfam" id="PF00825">
    <property type="entry name" value="Ribonuclease_P"/>
    <property type="match status" value="1"/>
</dbReference>
<dbReference type="SUPFAM" id="SSF54211">
    <property type="entry name" value="Ribosomal protein S5 domain 2-like"/>
    <property type="match status" value="1"/>
</dbReference>
<dbReference type="PROSITE" id="PS00648">
    <property type="entry name" value="RIBONUCLEASE_P"/>
    <property type="match status" value="1"/>
</dbReference>
<keyword id="KW-0255">Endonuclease</keyword>
<keyword id="KW-0378">Hydrolase</keyword>
<keyword id="KW-0540">Nuclease</keyword>
<keyword id="KW-0694">RNA-binding</keyword>
<keyword id="KW-0819">tRNA processing</keyword>
<organism>
    <name type="scientific">Escherichia coli (strain SMS-3-5 / SECEC)</name>
    <dbReference type="NCBI Taxonomy" id="439855"/>
    <lineage>
        <taxon>Bacteria</taxon>
        <taxon>Pseudomonadati</taxon>
        <taxon>Pseudomonadota</taxon>
        <taxon>Gammaproteobacteria</taxon>
        <taxon>Enterobacterales</taxon>
        <taxon>Enterobacteriaceae</taxon>
        <taxon>Escherichia</taxon>
    </lineage>
</organism>
<feature type="chain" id="PRO_1000194636" description="Ribonuclease P protein component">
    <location>
        <begin position="1"/>
        <end position="119"/>
    </location>
</feature>
<comment type="function">
    <text evidence="1">RNaseP catalyzes the removal of the 5'-leader sequence from pre-tRNA to produce the mature 5'-terminus. It can also cleave other RNA substrates such as 4.5S RNA. The protein component plays an auxiliary but essential role in vivo by binding to the 5'-leader sequence and broadening the substrate specificity of the ribozyme.</text>
</comment>
<comment type="catalytic activity">
    <reaction evidence="1">
        <text>Endonucleolytic cleavage of RNA, removing 5'-extranucleotides from tRNA precursor.</text>
        <dbReference type="EC" id="3.1.26.5"/>
    </reaction>
</comment>
<comment type="subunit">
    <text evidence="1">Consists of a catalytic RNA component (M1 or rnpB) and a protein subunit.</text>
</comment>
<comment type="similarity">
    <text evidence="1">Belongs to the RnpA family.</text>
</comment>
<sequence>MVKLAFPRELRLLTPSQFTFVFQQPQRAGTPQITILGRLNSLGHPRIGLTVAKKNVRRAHERNRIKRLTRESFRLRQHELPAMDFVVVAKKGVADLDNRALSEALEKLWRRHCRLARGS</sequence>